<evidence type="ECO:0000250" key="1"/>
<evidence type="ECO:0000305" key="2"/>
<name>HIS1_CORGL</name>
<keyword id="KW-0028">Amino-acid biosynthesis</keyword>
<keyword id="KW-0067">ATP-binding</keyword>
<keyword id="KW-0963">Cytoplasm</keyword>
<keyword id="KW-0328">Glycosyltransferase</keyword>
<keyword id="KW-0368">Histidine biosynthesis</keyword>
<keyword id="KW-0460">Magnesium</keyword>
<keyword id="KW-0479">Metal-binding</keyword>
<keyword id="KW-0547">Nucleotide-binding</keyword>
<keyword id="KW-1185">Reference proteome</keyword>
<keyword id="KW-0808">Transferase</keyword>
<accession>Q9Z472</accession>
<sequence>MLKIAVPNKGSLSERAMEILAEAGYAGRGDSKSLNVFDEANNVEFFFLRPKDIAIYVAGGQLDLGITGRDLARDSQADVHEVLSLGFGSSTFRYAAPADEEWSIEKLDGKRIATSYPNLVRDDLAARGLSAEVLRLDGAVEVSIKLGVADAIADVVSTGRTLRQQGLAPFGEVLCTSEAVIVGRKDEKVTPEQQILLRRIQGILHAQNFLMLDYNVDRDNLDAATAVTPGLSGPTVSPLARDNWVAVRAMVPRRSANAIMDKLAGLGAEAILASEIRIARI</sequence>
<protein>
    <recommendedName>
        <fullName>ATP phosphoribosyltransferase</fullName>
        <shortName>ATP-PRT</shortName>
        <shortName>ATP-PRTase</shortName>
        <ecNumber>2.4.2.17</ecNumber>
    </recommendedName>
</protein>
<reference key="1">
    <citation type="journal article" date="2000" name="Can. J. Microbiol.">
        <title>Cloning of the histidine biosynthetic genes from Corynebacterium glutamicum: organization and analysis of the hisG and hisE genes.</title>
        <authorList>
            <person name="Kwon J.H."/>
            <person name="Chun J.Y."/>
            <person name="Lee H.S."/>
            <person name="Cheon C.I."/>
            <person name="Song E.S."/>
            <person name="Min K.H."/>
            <person name="Lee M.-S."/>
        </authorList>
    </citation>
    <scope>NUCLEOTIDE SEQUENCE [GENOMIC DNA]</scope>
    <source>
        <strain>ATCC 13059 / LMG 3658 / NCIB 10332 / AS019 / 613</strain>
    </source>
</reference>
<reference key="2">
    <citation type="journal article" date="2003" name="Appl. Microbiol. Biotechnol.">
        <title>The Corynebacterium glutamicum genome: features and impacts on biotechnological processes.</title>
        <authorList>
            <person name="Ikeda M."/>
            <person name="Nakagawa S."/>
        </authorList>
    </citation>
    <scope>NUCLEOTIDE SEQUENCE [LARGE SCALE GENOMIC DNA]</scope>
    <source>
        <strain>ATCC 13032 / DSM 20300 / JCM 1318 / BCRC 11384 / CCUG 27702 / LMG 3730 / NBRC 12168 / NCIMB 10025 / NRRL B-2784 / 534</strain>
    </source>
</reference>
<reference key="3">
    <citation type="journal article" date="2003" name="J. Biotechnol.">
        <title>The complete Corynebacterium glutamicum ATCC 13032 genome sequence and its impact on the production of L-aspartate-derived amino acids and vitamins.</title>
        <authorList>
            <person name="Kalinowski J."/>
            <person name="Bathe B."/>
            <person name="Bartels D."/>
            <person name="Bischoff N."/>
            <person name="Bott M."/>
            <person name="Burkovski A."/>
            <person name="Dusch N."/>
            <person name="Eggeling L."/>
            <person name="Eikmanns B.J."/>
            <person name="Gaigalat L."/>
            <person name="Goesmann A."/>
            <person name="Hartmann M."/>
            <person name="Huthmacher K."/>
            <person name="Kraemer R."/>
            <person name="Linke B."/>
            <person name="McHardy A.C."/>
            <person name="Meyer F."/>
            <person name="Moeckel B."/>
            <person name="Pfefferle W."/>
            <person name="Puehler A."/>
            <person name="Rey D.A."/>
            <person name="Rueckert C."/>
            <person name="Rupp O."/>
            <person name="Sahm H."/>
            <person name="Wendisch V.F."/>
            <person name="Wiegraebe I."/>
            <person name="Tauch A."/>
        </authorList>
    </citation>
    <scope>NUCLEOTIDE SEQUENCE [LARGE SCALE GENOMIC DNA]</scope>
    <source>
        <strain>ATCC 13032 / DSM 20300 / JCM 1318 / BCRC 11384 / CCUG 27702 / LMG 3730 / NBRC 12168 / NCIMB 10025 / NRRL B-2784 / 534</strain>
    </source>
</reference>
<proteinExistence type="inferred from homology"/>
<dbReference type="EC" id="2.4.2.17"/>
<dbReference type="EMBL" id="AF050166">
    <property type="protein sequence ID" value="AAD02497.1"/>
    <property type="molecule type" value="Genomic_DNA"/>
</dbReference>
<dbReference type="EMBL" id="BA000036">
    <property type="protein sequence ID" value="BAB98897.1"/>
    <property type="molecule type" value="Genomic_DNA"/>
</dbReference>
<dbReference type="EMBL" id="BX927152">
    <property type="protein sequence ID" value="CAF21512.1"/>
    <property type="molecule type" value="Genomic_DNA"/>
</dbReference>
<dbReference type="RefSeq" id="NP_600720.1">
    <property type="nucleotide sequence ID" value="NC_003450.3"/>
</dbReference>
<dbReference type="RefSeq" id="WP_003856149.1">
    <property type="nucleotide sequence ID" value="NC_006958.1"/>
</dbReference>
<dbReference type="SMR" id="Q9Z472"/>
<dbReference type="STRING" id="196627.cg1698"/>
<dbReference type="GeneID" id="1019477"/>
<dbReference type="KEGG" id="cgb:cg1698"/>
<dbReference type="KEGG" id="cgl:Cgl1504"/>
<dbReference type="PATRIC" id="fig|196627.13.peg.1471"/>
<dbReference type="eggNOG" id="COG0040">
    <property type="taxonomic scope" value="Bacteria"/>
</dbReference>
<dbReference type="HOGENOM" id="CLU_038115_1_1_11"/>
<dbReference type="OrthoDB" id="9801867at2"/>
<dbReference type="BioCyc" id="CORYNE:G18NG-11087-MONOMER"/>
<dbReference type="BRENDA" id="2.4.2.17">
    <property type="organism ID" value="960"/>
</dbReference>
<dbReference type="UniPathway" id="UPA00031">
    <property type="reaction ID" value="UER00006"/>
</dbReference>
<dbReference type="Proteomes" id="UP000000582">
    <property type="component" value="Chromosome"/>
</dbReference>
<dbReference type="Proteomes" id="UP000001009">
    <property type="component" value="Chromosome"/>
</dbReference>
<dbReference type="GO" id="GO:0005737">
    <property type="term" value="C:cytoplasm"/>
    <property type="evidence" value="ECO:0007669"/>
    <property type="project" value="UniProtKB-SubCell"/>
</dbReference>
<dbReference type="GO" id="GO:0005524">
    <property type="term" value="F:ATP binding"/>
    <property type="evidence" value="ECO:0007669"/>
    <property type="project" value="UniProtKB-KW"/>
</dbReference>
<dbReference type="GO" id="GO:0003879">
    <property type="term" value="F:ATP phosphoribosyltransferase activity"/>
    <property type="evidence" value="ECO:0007669"/>
    <property type="project" value="UniProtKB-UniRule"/>
</dbReference>
<dbReference type="GO" id="GO:0000287">
    <property type="term" value="F:magnesium ion binding"/>
    <property type="evidence" value="ECO:0007669"/>
    <property type="project" value="UniProtKB-UniRule"/>
</dbReference>
<dbReference type="GO" id="GO:0000105">
    <property type="term" value="P:L-histidine biosynthetic process"/>
    <property type="evidence" value="ECO:0007669"/>
    <property type="project" value="UniProtKB-UniRule"/>
</dbReference>
<dbReference type="Gene3D" id="3.30.70.120">
    <property type="match status" value="1"/>
</dbReference>
<dbReference type="Gene3D" id="3.40.190.10">
    <property type="entry name" value="Periplasmic binding protein-like II"/>
    <property type="match status" value="2"/>
</dbReference>
<dbReference type="HAMAP" id="MF_00079">
    <property type="entry name" value="HisG_Long"/>
    <property type="match status" value="1"/>
</dbReference>
<dbReference type="InterPro" id="IPR020621">
    <property type="entry name" value="ATP-PRT_HisG_long"/>
</dbReference>
<dbReference type="InterPro" id="IPR013820">
    <property type="entry name" value="ATP_PRibTrfase_cat"/>
</dbReference>
<dbReference type="InterPro" id="IPR018198">
    <property type="entry name" value="ATP_PRibTrfase_CS"/>
</dbReference>
<dbReference type="InterPro" id="IPR001348">
    <property type="entry name" value="ATP_PRibTrfase_HisG"/>
</dbReference>
<dbReference type="InterPro" id="IPR013115">
    <property type="entry name" value="HisG_C"/>
</dbReference>
<dbReference type="InterPro" id="IPR011322">
    <property type="entry name" value="N-reg_PII-like_a/b"/>
</dbReference>
<dbReference type="InterPro" id="IPR015867">
    <property type="entry name" value="N-reg_PII/ATP_PRibTrfase_C"/>
</dbReference>
<dbReference type="NCBIfam" id="TIGR00070">
    <property type="entry name" value="hisG"/>
    <property type="match status" value="1"/>
</dbReference>
<dbReference type="NCBIfam" id="TIGR03455">
    <property type="entry name" value="HisG_C-term"/>
    <property type="match status" value="1"/>
</dbReference>
<dbReference type="PANTHER" id="PTHR21403:SF8">
    <property type="entry name" value="ATP PHOSPHORIBOSYLTRANSFERASE"/>
    <property type="match status" value="1"/>
</dbReference>
<dbReference type="PANTHER" id="PTHR21403">
    <property type="entry name" value="ATP PHOSPHORIBOSYLTRANSFERASE ATP-PRTASE"/>
    <property type="match status" value="1"/>
</dbReference>
<dbReference type="Pfam" id="PF01634">
    <property type="entry name" value="HisG"/>
    <property type="match status" value="1"/>
</dbReference>
<dbReference type="Pfam" id="PF08029">
    <property type="entry name" value="HisG_C"/>
    <property type="match status" value="1"/>
</dbReference>
<dbReference type="SUPFAM" id="SSF54913">
    <property type="entry name" value="GlnB-like"/>
    <property type="match status" value="1"/>
</dbReference>
<dbReference type="SUPFAM" id="SSF53850">
    <property type="entry name" value="Periplasmic binding protein-like II"/>
    <property type="match status" value="1"/>
</dbReference>
<dbReference type="PROSITE" id="PS01316">
    <property type="entry name" value="ATP_P_PHORIBOSYLTR"/>
    <property type="match status" value="1"/>
</dbReference>
<gene>
    <name type="primary">hisG</name>
    <name type="ordered locus">Cgl1504</name>
    <name type="ordered locus">cg1698</name>
</gene>
<feature type="chain" id="PRO_0000151846" description="ATP phosphoribosyltransferase">
    <location>
        <begin position="1"/>
        <end position="281"/>
    </location>
</feature>
<feature type="sequence conflict" description="In Ref. 1; AAD02497." evidence="2" ref="1">
    <original>G</original>
    <variation>A</variation>
    <location>
        <position position="10"/>
    </location>
</feature>
<feature type="sequence conflict" description="In Ref. 1; AAD02497." evidence="2" ref="1">
    <original>G</original>
    <variation>A</variation>
    <location>
        <position position="24"/>
    </location>
</feature>
<feature type="sequence conflict" description="In Ref. 1; AAD02497." evidence="2" ref="1">
    <location>
        <position position="74"/>
    </location>
</feature>
<feature type="sequence conflict" description="In Ref. 1; AAD02497." evidence="2" ref="1">
    <original>D</original>
    <variation>Y</variation>
    <location>
        <position position="99"/>
    </location>
</feature>
<feature type="sequence conflict" description="In Ref. 1; AAD02497." evidence="2" ref="1">
    <original>A</original>
    <variation>R</variation>
    <location>
        <position position="113"/>
    </location>
</feature>
<feature type="sequence conflict" description="In Ref. 1; AAD02497." evidence="2" ref="1">
    <original>RQQ</original>
    <variation>LT</variation>
    <location>
        <begin position="163"/>
        <end position="165"/>
    </location>
</feature>
<feature type="sequence conflict" description="In Ref. 1; AAD02497." evidence="2" ref="1">
    <original>L</original>
    <variation>C</variation>
    <location>
        <position position="197"/>
    </location>
</feature>
<organism>
    <name type="scientific">Corynebacterium glutamicum (strain ATCC 13032 / DSM 20300 / JCM 1318 / BCRC 11384 / CCUG 27702 / LMG 3730 / NBRC 12168 / NCIMB 10025 / NRRL B-2784 / 534)</name>
    <dbReference type="NCBI Taxonomy" id="196627"/>
    <lineage>
        <taxon>Bacteria</taxon>
        <taxon>Bacillati</taxon>
        <taxon>Actinomycetota</taxon>
        <taxon>Actinomycetes</taxon>
        <taxon>Mycobacteriales</taxon>
        <taxon>Corynebacteriaceae</taxon>
        <taxon>Corynebacterium</taxon>
    </lineage>
</organism>
<comment type="function">
    <text evidence="1">Catalyzes the condensation of ATP and 5-phosphoribose 1-diphosphate to form N'-(5'-phosphoribosyl)-ATP (PR-ATP). Has a crucial role in the pathway because the rate of histidine biosynthesis seems to be controlled primarily by regulation of HisG enzymatic activity (By similarity).</text>
</comment>
<comment type="catalytic activity">
    <reaction>
        <text>1-(5-phospho-beta-D-ribosyl)-ATP + diphosphate = 5-phospho-alpha-D-ribose 1-diphosphate + ATP</text>
        <dbReference type="Rhea" id="RHEA:18473"/>
        <dbReference type="ChEBI" id="CHEBI:30616"/>
        <dbReference type="ChEBI" id="CHEBI:33019"/>
        <dbReference type="ChEBI" id="CHEBI:58017"/>
        <dbReference type="ChEBI" id="CHEBI:73183"/>
        <dbReference type="EC" id="2.4.2.17"/>
    </reaction>
</comment>
<comment type="cofactor">
    <cofactor evidence="1">
        <name>Mg(2+)</name>
        <dbReference type="ChEBI" id="CHEBI:18420"/>
    </cofactor>
</comment>
<comment type="activity regulation">
    <text evidence="1">Feedback inhibited by histidine.</text>
</comment>
<comment type="pathway">
    <text>Amino-acid biosynthesis; L-histidine biosynthesis; L-histidine from 5-phospho-alpha-D-ribose 1-diphosphate: step 1/9.</text>
</comment>
<comment type="subcellular location">
    <subcellularLocation>
        <location evidence="1">Cytoplasm</location>
    </subcellularLocation>
</comment>
<comment type="similarity">
    <text evidence="2">Belongs to the ATP phosphoribosyltransferase family. Long subfamily.</text>
</comment>